<accession>Q6L1Y0</accession>
<protein>
    <recommendedName>
        <fullName evidence="1">Large ribosomal subunit protein uL11</fullName>
    </recommendedName>
    <alternativeName>
        <fullName evidence="2">50S ribosomal protein L11</fullName>
    </alternativeName>
</protein>
<reference key="1">
    <citation type="journal article" date="2004" name="Proc. Natl. Acad. Sci. U.S.A.">
        <title>Genome sequence of Picrophilus torridus and its implications for life around pH 0.</title>
        <authorList>
            <person name="Fuetterer O."/>
            <person name="Angelov A."/>
            <person name="Liesegang H."/>
            <person name="Gottschalk G."/>
            <person name="Schleper C."/>
            <person name="Schepers B."/>
            <person name="Dock C."/>
            <person name="Antranikian G."/>
            <person name="Liebl W."/>
        </authorList>
    </citation>
    <scope>NUCLEOTIDE SEQUENCE [LARGE SCALE GENOMIC DNA]</scope>
    <source>
        <strain>ATCC 700027 / DSM 9790 / JCM 10055 / NBRC 100828 / KAW 2/3</strain>
    </source>
</reference>
<organism>
    <name type="scientific">Picrophilus torridus (strain ATCC 700027 / DSM 9790 / JCM 10055 / NBRC 100828 / KAW 2/3)</name>
    <dbReference type="NCBI Taxonomy" id="1122961"/>
    <lineage>
        <taxon>Archaea</taxon>
        <taxon>Methanobacteriati</taxon>
        <taxon>Thermoplasmatota</taxon>
        <taxon>Thermoplasmata</taxon>
        <taxon>Thermoplasmatales</taxon>
        <taxon>Picrophilaceae</taxon>
        <taxon>Picrophilus</taxon>
    </lineage>
</organism>
<evidence type="ECO:0000255" key="1">
    <source>
        <dbReference type="HAMAP-Rule" id="MF_00736"/>
    </source>
</evidence>
<evidence type="ECO:0000305" key="2"/>
<keyword id="KW-0687">Ribonucleoprotein</keyword>
<keyword id="KW-0689">Ribosomal protein</keyword>
<keyword id="KW-0694">RNA-binding</keyword>
<keyword id="KW-0699">rRNA-binding</keyword>
<name>RL11_PICTO</name>
<sequence>MVAVKTMVEGGKATTGPPLGPALGPLGLNLGQVVKDINEKTKNFAGMQVPVTVNVIDPATKKYEIIVGVPPTSALLKKELGIEKGASKKKEKIAGNATLEQIKKVAESKRSALLSYNMKGAVLEVLGSAVSLGITVDGRDPKEVQKMIKNGEIEI</sequence>
<comment type="function">
    <text evidence="1">Forms part of the ribosomal stalk which helps the ribosome interact with GTP-bound translation factors.</text>
</comment>
<comment type="subunit">
    <text evidence="1">Part of the ribosomal stalk of the 50S ribosomal subunit. Interacts with L10 and the large rRNA to form the base of the stalk. L10 forms an elongated spine to which L12 dimers bind in a sequential fashion forming a multimeric L10(L12)X complex.</text>
</comment>
<comment type="similarity">
    <text evidence="1">Belongs to the universal ribosomal protein uL11 family.</text>
</comment>
<dbReference type="EMBL" id="AE017261">
    <property type="protein sequence ID" value="AAT43022.1"/>
    <property type="molecule type" value="Genomic_DNA"/>
</dbReference>
<dbReference type="RefSeq" id="WP_011177238.1">
    <property type="nucleotide sequence ID" value="NC_005877.1"/>
</dbReference>
<dbReference type="SMR" id="Q6L1Y0"/>
<dbReference type="FunCoup" id="Q6L1Y0">
    <property type="interactions" value="166"/>
</dbReference>
<dbReference type="STRING" id="263820.PTO0437"/>
<dbReference type="PaxDb" id="263820-PTO0437"/>
<dbReference type="GeneID" id="2845108"/>
<dbReference type="KEGG" id="pto:PTO0437"/>
<dbReference type="PATRIC" id="fig|263820.9.peg.462"/>
<dbReference type="eggNOG" id="arCOG04372">
    <property type="taxonomic scope" value="Archaea"/>
</dbReference>
<dbReference type="HOGENOM" id="CLU_074237_4_0_2"/>
<dbReference type="InParanoid" id="Q6L1Y0"/>
<dbReference type="OrthoDB" id="8842at2157"/>
<dbReference type="Proteomes" id="UP000000438">
    <property type="component" value="Chromosome"/>
</dbReference>
<dbReference type="GO" id="GO:0015934">
    <property type="term" value="C:large ribosomal subunit"/>
    <property type="evidence" value="ECO:0007669"/>
    <property type="project" value="TreeGrafter"/>
</dbReference>
<dbReference type="GO" id="GO:0070180">
    <property type="term" value="F:large ribosomal subunit rRNA binding"/>
    <property type="evidence" value="ECO:0007669"/>
    <property type="project" value="UniProtKB-UniRule"/>
</dbReference>
<dbReference type="GO" id="GO:0003735">
    <property type="term" value="F:structural constituent of ribosome"/>
    <property type="evidence" value="ECO:0007669"/>
    <property type="project" value="InterPro"/>
</dbReference>
<dbReference type="GO" id="GO:0006412">
    <property type="term" value="P:translation"/>
    <property type="evidence" value="ECO:0007669"/>
    <property type="project" value="UniProtKB-UniRule"/>
</dbReference>
<dbReference type="CDD" id="cd00349">
    <property type="entry name" value="Ribosomal_L11"/>
    <property type="match status" value="1"/>
</dbReference>
<dbReference type="Gene3D" id="1.10.10.250">
    <property type="entry name" value="Ribosomal protein L11, C-terminal domain"/>
    <property type="match status" value="1"/>
</dbReference>
<dbReference type="Gene3D" id="3.30.1550.10">
    <property type="entry name" value="Ribosomal protein L11/L12, N-terminal domain"/>
    <property type="match status" value="1"/>
</dbReference>
<dbReference type="HAMAP" id="MF_00736">
    <property type="entry name" value="Ribosomal_uL11"/>
    <property type="match status" value="1"/>
</dbReference>
<dbReference type="InterPro" id="IPR000911">
    <property type="entry name" value="Ribosomal_uL11"/>
</dbReference>
<dbReference type="InterPro" id="IPR020783">
    <property type="entry name" value="Ribosomal_uL11_C"/>
</dbReference>
<dbReference type="InterPro" id="IPR036769">
    <property type="entry name" value="Ribosomal_uL11_C_sf"/>
</dbReference>
<dbReference type="InterPro" id="IPR020784">
    <property type="entry name" value="Ribosomal_uL11_N"/>
</dbReference>
<dbReference type="InterPro" id="IPR036796">
    <property type="entry name" value="Ribosomal_uL11_N_sf"/>
</dbReference>
<dbReference type="NCBIfam" id="NF002232">
    <property type="entry name" value="PRK01143.1"/>
    <property type="match status" value="1"/>
</dbReference>
<dbReference type="PANTHER" id="PTHR11661">
    <property type="entry name" value="60S RIBOSOMAL PROTEIN L12"/>
    <property type="match status" value="1"/>
</dbReference>
<dbReference type="PANTHER" id="PTHR11661:SF1">
    <property type="entry name" value="LARGE RIBOSOMAL SUBUNIT PROTEIN UL11M"/>
    <property type="match status" value="1"/>
</dbReference>
<dbReference type="Pfam" id="PF00298">
    <property type="entry name" value="Ribosomal_L11"/>
    <property type="match status" value="1"/>
</dbReference>
<dbReference type="Pfam" id="PF03946">
    <property type="entry name" value="Ribosomal_L11_N"/>
    <property type="match status" value="1"/>
</dbReference>
<dbReference type="SMART" id="SM00649">
    <property type="entry name" value="RL11"/>
    <property type="match status" value="1"/>
</dbReference>
<dbReference type="SUPFAM" id="SSF54747">
    <property type="entry name" value="Ribosomal L11/L12e N-terminal domain"/>
    <property type="match status" value="1"/>
</dbReference>
<dbReference type="SUPFAM" id="SSF46906">
    <property type="entry name" value="Ribosomal protein L11, C-terminal domain"/>
    <property type="match status" value="1"/>
</dbReference>
<proteinExistence type="inferred from homology"/>
<gene>
    <name evidence="1" type="primary">rpl11</name>
    <name type="ordered locus">PTO0437</name>
</gene>
<feature type="chain" id="PRO_0000104441" description="Large ribosomal subunit protein uL11">
    <location>
        <begin position="1"/>
        <end position="155"/>
    </location>
</feature>